<name>RS2_PETMO</name>
<gene>
    <name evidence="1" type="primary">rpsB</name>
    <name type="ordered locus">Pmob_1848</name>
</gene>
<reference key="1">
    <citation type="submission" date="2007-11" db="EMBL/GenBank/DDBJ databases">
        <title>Complete sequence of Petroga mobilis SJ95.</title>
        <authorList>
            <consortium name="US DOE Joint Genome Institute"/>
            <person name="Copeland A."/>
            <person name="Lucas S."/>
            <person name="Lapidus A."/>
            <person name="Barry K."/>
            <person name="Glavina del Rio T."/>
            <person name="Dalin E."/>
            <person name="Tice H."/>
            <person name="Pitluck S."/>
            <person name="Meincke L."/>
            <person name="Brettin T."/>
            <person name="Bruce D."/>
            <person name="Detter J.C."/>
            <person name="Han C."/>
            <person name="Kuske C.R."/>
            <person name="Schmutz J."/>
            <person name="Larimer F."/>
            <person name="Land M."/>
            <person name="Hauser L."/>
            <person name="Kyrpides N."/>
            <person name="Mikhailova N."/>
            <person name="Noll K."/>
            <person name="Richardson P."/>
        </authorList>
    </citation>
    <scope>NUCLEOTIDE SEQUENCE [LARGE SCALE GENOMIC DNA]</scope>
    <source>
        <strain>DSM 10674 / SJ95</strain>
    </source>
</reference>
<organism>
    <name type="scientific">Petrotoga mobilis (strain DSM 10674 / SJ95)</name>
    <dbReference type="NCBI Taxonomy" id="403833"/>
    <lineage>
        <taxon>Bacteria</taxon>
        <taxon>Thermotogati</taxon>
        <taxon>Thermotogota</taxon>
        <taxon>Thermotogae</taxon>
        <taxon>Petrotogales</taxon>
        <taxon>Petrotogaceae</taxon>
        <taxon>Petrotoga</taxon>
    </lineage>
</organism>
<protein>
    <recommendedName>
        <fullName evidence="1">Small ribosomal subunit protein uS2</fullName>
    </recommendedName>
    <alternativeName>
        <fullName evidence="3">30S ribosomal protein S2</fullName>
    </alternativeName>
</protein>
<feature type="chain" id="PRO_1000078890" description="Small ribosomal subunit protein uS2">
    <location>
        <begin position="1"/>
        <end position="288"/>
    </location>
</feature>
<feature type="region of interest" description="Disordered" evidence="2">
    <location>
        <begin position="267"/>
        <end position="288"/>
    </location>
</feature>
<proteinExistence type="inferred from homology"/>
<keyword id="KW-0687">Ribonucleoprotein</keyword>
<keyword id="KW-0689">Ribosomal protein</keyword>
<evidence type="ECO:0000255" key="1">
    <source>
        <dbReference type="HAMAP-Rule" id="MF_00291"/>
    </source>
</evidence>
<evidence type="ECO:0000256" key="2">
    <source>
        <dbReference type="SAM" id="MobiDB-lite"/>
    </source>
</evidence>
<evidence type="ECO:0000305" key="3"/>
<dbReference type="EMBL" id="CP000879">
    <property type="protein sequence ID" value="ABX32537.1"/>
    <property type="molecule type" value="Genomic_DNA"/>
</dbReference>
<dbReference type="RefSeq" id="WP_012209634.1">
    <property type="nucleotide sequence ID" value="NC_010003.1"/>
</dbReference>
<dbReference type="SMR" id="A9BGV6"/>
<dbReference type="STRING" id="403833.Pmob_1848"/>
<dbReference type="KEGG" id="pmo:Pmob_1848"/>
<dbReference type="eggNOG" id="COG0052">
    <property type="taxonomic scope" value="Bacteria"/>
</dbReference>
<dbReference type="HOGENOM" id="CLU_040318_2_2_0"/>
<dbReference type="OrthoDB" id="9808036at2"/>
<dbReference type="Proteomes" id="UP000000789">
    <property type="component" value="Chromosome"/>
</dbReference>
<dbReference type="GO" id="GO:0022627">
    <property type="term" value="C:cytosolic small ribosomal subunit"/>
    <property type="evidence" value="ECO:0007669"/>
    <property type="project" value="TreeGrafter"/>
</dbReference>
<dbReference type="GO" id="GO:0003735">
    <property type="term" value="F:structural constituent of ribosome"/>
    <property type="evidence" value="ECO:0007669"/>
    <property type="project" value="InterPro"/>
</dbReference>
<dbReference type="GO" id="GO:0006412">
    <property type="term" value="P:translation"/>
    <property type="evidence" value="ECO:0007669"/>
    <property type="project" value="UniProtKB-UniRule"/>
</dbReference>
<dbReference type="CDD" id="cd01425">
    <property type="entry name" value="RPS2"/>
    <property type="match status" value="1"/>
</dbReference>
<dbReference type="FunFam" id="1.10.287.610:FF:000001">
    <property type="entry name" value="30S ribosomal protein S2"/>
    <property type="match status" value="1"/>
</dbReference>
<dbReference type="Gene3D" id="3.40.50.10490">
    <property type="entry name" value="Glucose-6-phosphate isomerase like protein, domain 1"/>
    <property type="match status" value="1"/>
</dbReference>
<dbReference type="Gene3D" id="1.10.287.610">
    <property type="entry name" value="Helix hairpin bin"/>
    <property type="match status" value="1"/>
</dbReference>
<dbReference type="HAMAP" id="MF_00291_B">
    <property type="entry name" value="Ribosomal_uS2_B"/>
    <property type="match status" value="1"/>
</dbReference>
<dbReference type="InterPro" id="IPR001865">
    <property type="entry name" value="Ribosomal_uS2"/>
</dbReference>
<dbReference type="InterPro" id="IPR005706">
    <property type="entry name" value="Ribosomal_uS2_bac/mit/plastid"/>
</dbReference>
<dbReference type="InterPro" id="IPR018130">
    <property type="entry name" value="Ribosomal_uS2_CS"/>
</dbReference>
<dbReference type="InterPro" id="IPR023591">
    <property type="entry name" value="Ribosomal_uS2_flav_dom_sf"/>
</dbReference>
<dbReference type="NCBIfam" id="TIGR01011">
    <property type="entry name" value="rpsB_bact"/>
    <property type="match status" value="1"/>
</dbReference>
<dbReference type="PANTHER" id="PTHR12534">
    <property type="entry name" value="30S RIBOSOMAL PROTEIN S2 PROKARYOTIC AND ORGANELLAR"/>
    <property type="match status" value="1"/>
</dbReference>
<dbReference type="PANTHER" id="PTHR12534:SF0">
    <property type="entry name" value="SMALL RIBOSOMAL SUBUNIT PROTEIN US2M"/>
    <property type="match status" value="1"/>
</dbReference>
<dbReference type="Pfam" id="PF00318">
    <property type="entry name" value="Ribosomal_S2"/>
    <property type="match status" value="1"/>
</dbReference>
<dbReference type="PRINTS" id="PR00395">
    <property type="entry name" value="RIBOSOMALS2"/>
</dbReference>
<dbReference type="SUPFAM" id="SSF52313">
    <property type="entry name" value="Ribosomal protein S2"/>
    <property type="match status" value="1"/>
</dbReference>
<dbReference type="PROSITE" id="PS00962">
    <property type="entry name" value="RIBOSOMAL_S2_1"/>
    <property type="match status" value="1"/>
</dbReference>
<dbReference type="PROSITE" id="PS00963">
    <property type="entry name" value="RIBOSOMAL_S2_2"/>
    <property type="match status" value="1"/>
</dbReference>
<comment type="similarity">
    <text evidence="1">Belongs to the universal ribosomal protein uS2 family.</text>
</comment>
<sequence length="288" mass="33258">MSVVSMKQLLEAGAHFGHRTRRWNPKMQPYIFTARKGIHIIDLQKTLKSIDEAYDFLKNSVMEKKRVLFVGTKKQAQQIVADEARRCGEFFVNNRWLGGLLTNFKTIKSRIDKLEQLTEYVESEEFSKLPKKEQATIRRNLEKLEKNLGGLRGMKKIPDILFIIDPKKEEIAVKEANLLKIPIIATVDTNCDPDVIDYVIPANDDAIRTIMLIVSKMADAIIEGKEGRIETLEESSEVEEEEEEKDEVIDEVDEKLEAEEKYASYAEEVEEVEEEFIPSEIEDEDEKF</sequence>
<accession>A9BGV6</accession>